<organism>
    <name type="scientific">Oryza sativa subsp. indica</name>
    <name type="common">Rice</name>
    <dbReference type="NCBI Taxonomy" id="39946"/>
    <lineage>
        <taxon>Eukaryota</taxon>
        <taxon>Viridiplantae</taxon>
        <taxon>Streptophyta</taxon>
        <taxon>Embryophyta</taxon>
        <taxon>Tracheophyta</taxon>
        <taxon>Spermatophyta</taxon>
        <taxon>Magnoliopsida</taxon>
        <taxon>Liliopsida</taxon>
        <taxon>Poales</taxon>
        <taxon>Poaceae</taxon>
        <taxon>BOP clade</taxon>
        <taxon>Oryzoideae</taxon>
        <taxon>Oryzeae</taxon>
        <taxon>Oryzinae</taxon>
        <taxon>Oryza</taxon>
        <taxon>Oryza sativa</taxon>
    </lineage>
</organism>
<protein>
    <recommendedName>
        <fullName>Probable glutathione S-transferase GSTU1</fullName>
        <ecNumber>2.5.1.18</ecNumber>
    </recommendedName>
</protein>
<name>GSTU1_ORYSI</name>
<accession>A2XMN2</accession>
<accession>O65032</accession>
<reference key="1">
    <citation type="submission" date="1998-02" db="EMBL/GenBank/DDBJ databases">
        <title>Nucleotide sequence of rice glutathione S-transferase.</title>
        <authorList>
            <person name="Yun C.-H."/>
            <person name="Lee M.C."/>
            <person name="Park J.H."/>
            <person name="Eun M.Y."/>
        </authorList>
    </citation>
    <scope>NUCLEOTIDE SEQUENCE [MRNA]</scope>
    <source>
        <strain>cv. Milyang 23</strain>
    </source>
</reference>
<reference key="2">
    <citation type="journal article" date="2005" name="PLoS Biol.">
        <title>The genomes of Oryza sativa: a history of duplications.</title>
        <authorList>
            <person name="Yu J."/>
            <person name="Wang J."/>
            <person name="Lin W."/>
            <person name="Li S."/>
            <person name="Li H."/>
            <person name="Zhou J."/>
            <person name="Ni P."/>
            <person name="Dong W."/>
            <person name="Hu S."/>
            <person name="Zeng C."/>
            <person name="Zhang J."/>
            <person name="Zhang Y."/>
            <person name="Li R."/>
            <person name="Xu Z."/>
            <person name="Li S."/>
            <person name="Li X."/>
            <person name="Zheng H."/>
            <person name="Cong L."/>
            <person name="Lin L."/>
            <person name="Yin J."/>
            <person name="Geng J."/>
            <person name="Li G."/>
            <person name="Shi J."/>
            <person name="Liu J."/>
            <person name="Lv H."/>
            <person name="Li J."/>
            <person name="Wang J."/>
            <person name="Deng Y."/>
            <person name="Ran L."/>
            <person name="Shi X."/>
            <person name="Wang X."/>
            <person name="Wu Q."/>
            <person name="Li C."/>
            <person name="Ren X."/>
            <person name="Wang J."/>
            <person name="Wang X."/>
            <person name="Li D."/>
            <person name="Liu D."/>
            <person name="Zhang X."/>
            <person name="Ji Z."/>
            <person name="Zhao W."/>
            <person name="Sun Y."/>
            <person name="Zhang Z."/>
            <person name="Bao J."/>
            <person name="Han Y."/>
            <person name="Dong L."/>
            <person name="Ji J."/>
            <person name="Chen P."/>
            <person name="Wu S."/>
            <person name="Liu J."/>
            <person name="Xiao Y."/>
            <person name="Bu D."/>
            <person name="Tan J."/>
            <person name="Yang L."/>
            <person name="Ye C."/>
            <person name="Zhang J."/>
            <person name="Xu J."/>
            <person name="Zhou Y."/>
            <person name="Yu Y."/>
            <person name="Zhang B."/>
            <person name="Zhuang S."/>
            <person name="Wei H."/>
            <person name="Liu B."/>
            <person name="Lei M."/>
            <person name="Yu H."/>
            <person name="Li Y."/>
            <person name="Xu H."/>
            <person name="Wei S."/>
            <person name="He X."/>
            <person name="Fang L."/>
            <person name="Zhang Z."/>
            <person name="Zhang Y."/>
            <person name="Huang X."/>
            <person name="Su Z."/>
            <person name="Tong W."/>
            <person name="Li J."/>
            <person name="Tong Z."/>
            <person name="Li S."/>
            <person name="Ye J."/>
            <person name="Wang L."/>
            <person name="Fang L."/>
            <person name="Lei T."/>
            <person name="Chen C.-S."/>
            <person name="Chen H.-C."/>
            <person name="Xu Z."/>
            <person name="Li H."/>
            <person name="Huang H."/>
            <person name="Zhang F."/>
            <person name="Xu H."/>
            <person name="Li N."/>
            <person name="Zhao C."/>
            <person name="Li S."/>
            <person name="Dong L."/>
            <person name="Huang Y."/>
            <person name="Li L."/>
            <person name="Xi Y."/>
            <person name="Qi Q."/>
            <person name="Li W."/>
            <person name="Zhang B."/>
            <person name="Hu W."/>
            <person name="Zhang Y."/>
            <person name="Tian X."/>
            <person name="Jiao Y."/>
            <person name="Liang X."/>
            <person name="Jin J."/>
            <person name="Gao L."/>
            <person name="Zheng W."/>
            <person name="Hao B."/>
            <person name="Liu S.-M."/>
            <person name="Wang W."/>
            <person name="Yuan L."/>
            <person name="Cao M."/>
            <person name="McDermott J."/>
            <person name="Samudrala R."/>
            <person name="Wang J."/>
            <person name="Wong G.K.-S."/>
            <person name="Yang H."/>
        </authorList>
    </citation>
    <scope>NUCLEOTIDE SEQUENCE [LARGE SCALE GENOMIC DNA]</scope>
    <source>
        <strain>cv. 93-11</strain>
    </source>
</reference>
<reference key="3">
    <citation type="journal article" date="2004" name="Mol. Genet. Genomics">
        <title>Organisation and structural evolution of the rice glutathione S-transferase gene family.</title>
        <authorList>
            <person name="Soranzo N."/>
            <person name="Sari Gorla M."/>
            <person name="Mizzi L."/>
            <person name="De Toma G."/>
            <person name="Frova C."/>
        </authorList>
    </citation>
    <scope>GENE FAMILY</scope>
    <scope>NOMENCLATURE</scope>
</reference>
<dbReference type="EC" id="2.5.1.18"/>
<dbReference type="EMBL" id="AF050102">
    <property type="protein sequence ID" value="AAC05216.1"/>
    <property type="molecule type" value="mRNA"/>
</dbReference>
<dbReference type="EMBL" id="CM000128">
    <property type="protein sequence ID" value="EAY92092.1"/>
    <property type="molecule type" value="Genomic_DNA"/>
</dbReference>
<dbReference type="PIR" id="T02765">
    <property type="entry name" value="T02765"/>
</dbReference>
<dbReference type="PDB" id="1OYJ">
    <property type="method" value="X-ray"/>
    <property type="resolution" value="1.95 A"/>
    <property type="chains" value="A/B/C/D=1-231"/>
</dbReference>
<dbReference type="PDBsum" id="1OYJ"/>
<dbReference type="SMR" id="A2XMN2"/>
<dbReference type="STRING" id="39946.A2XMN2"/>
<dbReference type="EnsemblPlants" id="BGIOSGA009694-TA">
    <property type="protein sequence ID" value="BGIOSGA009694-PA"/>
    <property type="gene ID" value="BGIOSGA009694"/>
</dbReference>
<dbReference type="EnsemblPlants" id="OsGoSa_03g0036800.01">
    <property type="protein sequence ID" value="OsGoSa_03g0036800.01"/>
    <property type="gene ID" value="OsGoSa_03g0036800"/>
</dbReference>
<dbReference type="EnsemblPlants" id="OsIR64_03g0036660.01">
    <property type="protein sequence ID" value="OsIR64_03g0036660.01"/>
    <property type="gene ID" value="OsIR64_03g0036660"/>
</dbReference>
<dbReference type="EnsemblPlants" id="OsKYG_03g0037160.01">
    <property type="protein sequence ID" value="OsKYG_03g0037160.01"/>
    <property type="gene ID" value="OsKYG_03g0037160"/>
</dbReference>
<dbReference type="EnsemblPlants" id="OsLaMu_03g0036850.01">
    <property type="protein sequence ID" value="OsLaMu_03g0036850.01"/>
    <property type="gene ID" value="OsLaMu_03g0036850"/>
</dbReference>
<dbReference type="EnsemblPlants" id="OsLima_03g0037150.01">
    <property type="protein sequence ID" value="OsLima_03g0037150.01"/>
    <property type="gene ID" value="OsLima_03g0037150"/>
</dbReference>
<dbReference type="EnsemblPlants" id="OsLiXu_Ung0014750.01">
    <property type="protein sequence ID" value="OsLiXu_Ung0014750.01"/>
    <property type="gene ID" value="OsLiXu_Ung0014750"/>
</dbReference>
<dbReference type="EnsemblPlants" id="OsPr106_03g0036860.01">
    <property type="protein sequence ID" value="OsPr106_03g0036860.01"/>
    <property type="gene ID" value="OsPr106_03g0036860"/>
</dbReference>
<dbReference type="EnsemblPlants" id="OsZS97_03G036820_01">
    <property type="protein sequence ID" value="OsZS97_03G036820_01"/>
    <property type="gene ID" value="OsZS97_03G036820"/>
</dbReference>
<dbReference type="Gramene" id="BGIOSGA009694-TA">
    <property type="protein sequence ID" value="BGIOSGA009694-PA"/>
    <property type="gene ID" value="BGIOSGA009694"/>
</dbReference>
<dbReference type="Gramene" id="OsGoSa_03g0036800.01">
    <property type="protein sequence ID" value="OsGoSa_03g0036800.01"/>
    <property type="gene ID" value="OsGoSa_03g0036800"/>
</dbReference>
<dbReference type="Gramene" id="OsIR64_03g0036660.01">
    <property type="protein sequence ID" value="OsIR64_03g0036660.01"/>
    <property type="gene ID" value="OsIR64_03g0036660"/>
</dbReference>
<dbReference type="Gramene" id="OsKYG_03g0037160.01">
    <property type="protein sequence ID" value="OsKYG_03g0037160.01"/>
    <property type="gene ID" value="OsKYG_03g0037160"/>
</dbReference>
<dbReference type="Gramene" id="OsLaMu_03g0036850.01">
    <property type="protein sequence ID" value="OsLaMu_03g0036850.01"/>
    <property type="gene ID" value="OsLaMu_03g0036850"/>
</dbReference>
<dbReference type="Gramene" id="OsLima_03g0037150.01">
    <property type="protein sequence ID" value="OsLima_03g0037150.01"/>
    <property type="gene ID" value="OsLima_03g0037150"/>
</dbReference>
<dbReference type="Gramene" id="OsLiXu_Ung0014750.01">
    <property type="protein sequence ID" value="OsLiXu_Ung0014750.01"/>
    <property type="gene ID" value="OsLiXu_Ung0014750"/>
</dbReference>
<dbReference type="Gramene" id="OsPr106_03g0036860.01">
    <property type="protein sequence ID" value="OsPr106_03g0036860.01"/>
    <property type="gene ID" value="OsPr106_03g0036860"/>
</dbReference>
<dbReference type="Gramene" id="OsZS97_03G036820_01">
    <property type="protein sequence ID" value="OsZS97_03G036820_01"/>
    <property type="gene ID" value="OsZS97_03G036820"/>
</dbReference>
<dbReference type="HOGENOM" id="CLU_011226_18_2_1"/>
<dbReference type="OMA" id="WARRCGQ"/>
<dbReference type="OrthoDB" id="202840at2759"/>
<dbReference type="Proteomes" id="UP000007015">
    <property type="component" value="Chromosome 3"/>
</dbReference>
<dbReference type="GO" id="GO:0005737">
    <property type="term" value="C:cytoplasm"/>
    <property type="evidence" value="ECO:0007669"/>
    <property type="project" value="TreeGrafter"/>
</dbReference>
<dbReference type="GO" id="GO:0004364">
    <property type="term" value="F:glutathione transferase activity"/>
    <property type="evidence" value="ECO:0007669"/>
    <property type="project" value="UniProtKB-EC"/>
</dbReference>
<dbReference type="GO" id="GO:0006749">
    <property type="term" value="P:glutathione metabolic process"/>
    <property type="evidence" value="ECO:0007669"/>
    <property type="project" value="InterPro"/>
</dbReference>
<dbReference type="CDD" id="cd03185">
    <property type="entry name" value="GST_C_Tau"/>
    <property type="match status" value="1"/>
</dbReference>
<dbReference type="CDD" id="cd03058">
    <property type="entry name" value="GST_N_Tau"/>
    <property type="match status" value="1"/>
</dbReference>
<dbReference type="FunFam" id="1.20.1050.10:FF:000018">
    <property type="entry name" value="Glutathione S-transferase U20"/>
    <property type="match status" value="1"/>
</dbReference>
<dbReference type="FunFam" id="3.40.30.10:FF:000014">
    <property type="entry name" value="Tau class glutathione S-transferase"/>
    <property type="match status" value="1"/>
</dbReference>
<dbReference type="Gene3D" id="1.20.1050.10">
    <property type="match status" value="1"/>
</dbReference>
<dbReference type="Gene3D" id="3.40.30.10">
    <property type="entry name" value="Glutaredoxin"/>
    <property type="match status" value="1"/>
</dbReference>
<dbReference type="InterPro" id="IPR010987">
    <property type="entry name" value="Glutathione-S-Trfase_C-like"/>
</dbReference>
<dbReference type="InterPro" id="IPR036282">
    <property type="entry name" value="Glutathione-S-Trfase_C_sf"/>
</dbReference>
<dbReference type="InterPro" id="IPR004045">
    <property type="entry name" value="Glutathione_S-Trfase_N"/>
</dbReference>
<dbReference type="InterPro" id="IPR045074">
    <property type="entry name" value="GST_C_Tau"/>
</dbReference>
<dbReference type="InterPro" id="IPR045073">
    <property type="entry name" value="Omega/Tau-like"/>
</dbReference>
<dbReference type="InterPro" id="IPR036249">
    <property type="entry name" value="Thioredoxin-like_sf"/>
</dbReference>
<dbReference type="PANTHER" id="PTHR11260:SF732">
    <property type="entry name" value="GLUTATHIONE S-TRANSFERASE GSTU1-RELATED"/>
    <property type="match status" value="1"/>
</dbReference>
<dbReference type="PANTHER" id="PTHR11260">
    <property type="entry name" value="GLUTATHIONE S-TRANSFERASE, GST, SUPERFAMILY, GST DOMAIN CONTAINING"/>
    <property type="match status" value="1"/>
</dbReference>
<dbReference type="Pfam" id="PF13410">
    <property type="entry name" value="GST_C_2"/>
    <property type="match status" value="1"/>
</dbReference>
<dbReference type="Pfam" id="PF13417">
    <property type="entry name" value="GST_N_3"/>
    <property type="match status" value="1"/>
</dbReference>
<dbReference type="SFLD" id="SFLDG01152">
    <property type="entry name" value="Main.3:_Omega-_and_Tau-like"/>
    <property type="match status" value="1"/>
</dbReference>
<dbReference type="SFLD" id="SFLDG00358">
    <property type="entry name" value="Main_(cytGST)"/>
    <property type="match status" value="1"/>
</dbReference>
<dbReference type="SUPFAM" id="SSF47616">
    <property type="entry name" value="GST C-terminal domain-like"/>
    <property type="match status" value="1"/>
</dbReference>
<dbReference type="SUPFAM" id="SSF52833">
    <property type="entry name" value="Thioredoxin-like"/>
    <property type="match status" value="1"/>
</dbReference>
<dbReference type="PROSITE" id="PS50405">
    <property type="entry name" value="GST_CTER"/>
    <property type="match status" value="1"/>
</dbReference>
<dbReference type="PROSITE" id="PS50404">
    <property type="entry name" value="GST_NTER"/>
    <property type="match status" value="1"/>
</dbReference>
<feature type="chain" id="PRO_0000295653" description="Probable glutathione S-transferase GSTU1">
    <location>
        <begin position="1"/>
        <end position="231"/>
    </location>
</feature>
<feature type="domain" description="GST N-terminal">
    <location>
        <begin position="5"/>
        <end position="84"/>
    </location>
</feature>
<feature type="domain" description="GST C-terminal">
    <location>
        <begin position="97"/>
        <end position="220"/>
    </location>
</feature>
<feature type="binding site" evidence="1">
    <location>
        <position position="15"/>
    </location>
    <ligand>
        <name>glutathione</name>
        <dbReference type="ChEBI" id="CHEBI:57925"/>
    </ligand>
</feature>
<feature type="binding site" evidence="1">
    <location>
        <position position="42"/>
    </location>
    <ligand>
        <name>glutathione</name>
        <dbReference type="ChEBI" id="CHEBI:57925"/>
    </ligand>
</feature>
<feature type="binding site" evidence="1">
    <location>
        <position position="56"/>
    </location>
    <ligand>
        <name>glutathione</name>
        <dbReference type="ChEBI" id="CHEBI:57925"/>
    </ligand>
</feature>
<feature type="binding site" evidence="1">
    <location>
        <begin position="68"/>
        <end position="69"/>
    </location>
    <ligand>
        <name>glutathione</name>
        <dbReference type="ChEBI" id="CHEBI:57925"/>
    </ligand>
</feature>
<feature type="sequence conflict" description="In Ref. 1; AAC05216." evidence="2" ref="1">
    <original>S</original>
    <variation>P</variation>
    <location>
        <position position="88"/>
    </location>
</feature>
<feature type="sequence conflict" description="In Ref. 1; AAC05216." evidence="2" ref="1">
    <original>A</original>
    <variation>G</variation>
    <location>
        <position position="90"/>
    </location>
</feature>
<feature type="sequence conflict" description="In Ref. 1; AAC05216." evidence="2" ref="1">
    <original>Y</original>
    <variation>F</variation>
    <location>
        <position position="99"/>
    </location>
</feature>
<feature type="sequence conflict" description="In Ref. 1; AAC05216." evidence="2" ref="1">
    <original>Q</original>
    <variation>H</variation>
    <location>
        <position position="130"/>
    </location>
</feature>
<feature type="sequence conflict" description="In Ref. 1; AAC05216." evidence="2" ref="1">
    <original>WFYSY</original>
    <variation>CSTAT</variation>
    <location>
        <begin position="175"/>
        <end position="179"/>
    </location>
</feature>
<feature type="sequence conflict" description="In Ref. 1; AAC05216." evidence="2" ref="1">
    <original>C</original>
    <variation>R</variation>
    <location>
        <position position="201"/>
    </location>
</feature>
<feature type="sequence conflict" description="In Ref. 1; AAC05216." evidence="2" ref="1">
    <original>A</original>
    <variation>V</variation>
    <location>
        <position position="208"/>
    </location>
</feature>
<feature type="strand" evidence="3">
    <location>
        <begin position="6"/>
        <end position="11"/>
    </location>
</feature>
<feature type="helix" evidence="3">
    <location>
        <begin position="16"/>
        <end position="28"/>
    </location>
</feature>
<feature type="strand" evidence="3">
    <location>
        <begin position="33"/>
        <end position="36"/>
    </location>
</feature>
<feature type="helix" evidence="3">
    <location>
        <begin position="44"/>
        <end position="49"/>
    </location>
</feature>
<feature type="turn" evidence="3">
    <location>
        <begin position="51"/>
        <end position="53"/>
    </location>
</feature>
<feature type="strand" evidence="3">
    <location>
        <begin position="58"/>
        <end position="61"/>
    </location>
</feature>
<feature type="strand" evidence="3">
    <location>
        <begin position="64"/>
        <end position="68"/>
    </location>
</feature>
<feature type="helix" evidence="3">
    <location>
        <begin position="69"/>
        <end position="79"/>
    </location>
</feature>
<feature type="helix" evidence="3">
    <location>
        <begin position="97"/>
        <end position="120"/>
    </location>
</feature>
<feature type="helix" evidence="3">
    <location>
        <begin position="127"/>
        <end position="148"/>
    </location>
</feature>
<feature type="strand" evidence="3">
    <location>
        <begin position="154"/>
        <end position="161"/>
    </location>
</feature>
<feature type="helix" evidence="3">
    <location>
        <begin position="164"/>
        <end position="169"/>
    </location>
</feature>
<feature type="helix" evidence="3">
    <location>
        <begin position="170"/>
        <end position="174"/>
    </location>
</feature>
<feature type="helix" evidence="3">
    <location>
        <begin position="176"/>
        <end position="183"/>
    </location>
</feature>
<feature type="helix" evidence="3">
    <location>
        <begin position="187"/>
        <end position="190"/>
    </location>
</feature>
<feature type="helix" evidence="3">
    <location>
        <begin position="192"/>
        <end position="201"/>
    </location>
</feature>
<feature type="helix" evidence="3">
    <location>
        <begin position="205"/>
        <end position="210"/>
    </location>
</feature>
<feature type="helix" evidence="3">
    <location>
        <begin position="214"/>
        <end position="223"/>
    </location>
</feature>
<feature type="turn" evidence="3">
    <location>
        <begin position="224"/>
        <end position="226"/>
    </location>
</feature>
<comment type="function">
    <text>Conjugation of reduced glutathione to a wide number of exogenous and endogenous hydrophobic electrophiles.</text>
</comment>
<comment type="catalytic activity">
    <reaction>
        <text>RX + glutathione = an S-substituted glutathione + a halide anion + H(+)</text>
        <dbReference type="Rhea" id="RHEA:16437"/>
        <dbReference type="ChEBI" id="CHEBI:15378"/>
        <dbReference type="ChEBI" id="CHEBI:16042"/>
        <dbReference type="ChEBI" id="CHEBI:17792"/>
        <dbReference type="ChEBI" id="CHEBI:57925"/>
        <dbReference type="ChEBI" id="CHEBI:90779"/>
        <dbReference type="EC" id="2.5.1.18"/>
    </reaction>
</comment>
<comment type="similarity">
    <text evidence="2">Belongs to the GST superfamily. Tau family.</text>
</comment>
<keyword id="KW-0002">3D-structure</keyword>
<keyword id="KW-1185">Reference proteome</keyword>
<keyword id="KW-0808">Transferase</keyword>
<sequence length="231" mass="25832">MAEEKELVLLDFWVSPFGQRCRIAMAEKGLEFEYREEDLGNKSDLLLRSNPVHRKIPVLLHAGRPVSESLVILQYLDDAFPGTPHLLSPANSGDADAAYARATARFWADYVDRKLYDCGSRLWRLKGEPQAAAGREMAEILRTLEAELGDREFFGGGGGGRLGFVDVALVPFTAWFYSYERCGGFSVEEVAPRLAAWARRCGRIDSVAKHLPSPEKVYDFVGVLKKKYGVE</sequence>
<gene>
    <name type="primary">GSTU1</name>
    <name type="synonym">GST1</name>
    <name type="ORF">OsI_013325</name>
</gene>
<proteinExistence type="evidence at protein level"/>
<evidence type="ECO:0000250" key="1"/>
<evidence type="ECO:0000305" key="2"/>
<evidence type="ECO:0007829" key="3">
    <source>
        <dbReference type="PDB" id="1OYJ"/>
    </source>
</evidence>